<reference key="1">
    <citation type="journal article" date="2008" name="PLoS ONE">
        <title>Comparative analysis of Acinetobacters: three genomes for three lifestyles.</title>
        <authorList>
            <person name="Vallenet D."/>
            <person name="Nordmann P."/>
            <person name="Barbe V."/>
            <person name="Poirel L."/>
            <person name="Mangenot S."/>
            <person name="Bataille E."/>
            <person name="Dossat C."/>
            <person name="Gas S."/>
            <person name="Kreimeyer A."/>
            <person name="Lenoble P."/>
            <person name="Oztas S."/>
            <person name="Poulain J."/>
            <person name="Segurens B."/>
            <person name="Robert C."/>
            <person name="Abergel C."/>
            <person name="Claverie J.-M."/>
            <person name="Raoult D."/>
            <person name="Medigue C."/>
            <person name="Weissenbach J."/>
            <person name="Cruveiller S."/>
        </authorList>
    </citation>
    <scope>NUCLEOTIDE SEQUENCE [LARGE SCALE GENOMIC DNA]</scope>
    <source>
        <strain>AYE</strain>
    </source>
</reference>
<protein>
    <recommendedName>
        <fullName evidence="1">Transcriptional repressor NrdR</fullName>
    </recommendedName>
</protein>
<organism>
    <name type="scientific">Acinetobacter baumannii (strain AYE)</name>
    <dbReference type="NCBI Taxonomy" id="509173"/>
    <lineage>
        <taxon>Bacteria</taxon>
        <taxon>Pseudomonadati</taxon>
        <taxon>Pseudomonadota</taxon>
        <taxon>Gammaproteobacteria</taxon>
        <taxon>Moraxellales</taxon>
        <taxon>Moraxellaceae</taxon>
        <taxon>Acinetobacter</taxon>
        <taxon>Acinetobacter calcoaceticus/baumannii complex</taxon>
    </lineage>
</organism>
<proteinExistence type="inferred from homology"/>
<name>NRDR_ACIBY</name>
<sequence length="152" mass="17808">MHCPFCNAADSKVIDSRLAAEGCQIRRRRECVSCGERFTTFESYEVVMPRVIKSNGKNEPFDEAKLRRSLMHALQKRPVTQEQIETVLSDIQLQIRRLGERDVKSRTIGEIVMQSLFALDHVAYVRFASVYQDFQDVEAFRRQIEQMQQREH</sequence>
<feature type="chain" id="PRO_1000191770" description="Transcriptional repressor NrdR">
    <location>
        <begin position="1"/>
        <end position="152"/>
    </location>
</feature>
<feature type="domain" description="ATP-cone" evidence="1">
    <location>
        <begin position="49"/>
        <end position="139"/>
    </location>
</feature>
<feature type="zinc finger region" evidence="1">
    <location>
        <begin position="3"/>
        <end position="34"/>
    </location>
</feature>
<accession>B0VDB2</accession>
<comment type="function">
    <text evidence="1">Negatively regulates transcription of bacterial ribonucleotide reductase nrd genes and operons by binding to NrdR-boxes.</text>
</comment>
<comment type="cofactor">
    <cofactor evidence="1">
        <name>Zn(2+)</name>
        <dbReference type="ChEBI" id="CHEBI:29105"/>
    </cofactor>
    <text evidence="1">Binds 1 zinc ion.</text>
</comment>
<comment type="similarity">
    <text evidence="1">Belongs to the NrdR family.</text>
</comment>
<keyword id="KW-0067">ATP-binding</keyword>
<keyword id="KW-0238">DNA-binding</keyword>
<keyword id="KW-0479">Metal-binding</keyword>
<keyword id="KW-0547">Nucleotide-binding</keyword>
<keyword id="KW-0678">Repressor</keyword>
<keyword id="KW-0804">Transcription</keyword>
<keyword id="KW-0805">Transcription regulation</keyword>
<keyword id="KW-0862">Zinc</keyword>
<keyword id="KW-0863">Zinc-finger</keyword>
<dbReference type="EMBL" id="CU459141">
    <property type="protein sequence ID" value="CAM88335.1"/>
    <property type="molecule type" value="Genomic_DNA"/>
</dbReference>
<dbReference type="RefSeq" id="WP_000543541.1">
    <property type="nucleotide sequence ID" value="NZ_JBDGFB010000019.1"/>
</dbReference>
<dbReference type="SMR" id="B0VDB2"/>
<dbReference type="EnsemblBacteria" id="CAM88335">
    <property type="protein sequence ID" value="CAM88335"/>
    <property type="gene ID" value="ABAYE3547"/>
</dbReference>
<dbReference type="GeneID" id="92892221"/>
<dbReference type="KEGG" id="aby:ABAYE3547"/>
<dbReference type="HOGENOM" id="CLU_108412_0_0_6"/>
<dbReference type="GO" id="GO:0005524">
    <property type="term" value="F:ATP binding"/>
    <property type="evidence" value="ECO:0007669"/>
    <property type="project" value="UniProtKB-KW"/>
</dbReference>
<dbReference type="GO" id="GO:0003677">
    <property type="term" value="F:DNA binding"/>
    <property type="evidence" value="ECO:0007669"/>
    <property type="project" value="UniProtKB-KW"/>
</dbReference>
<dbReference type="GO" id="GO:0008270">
    <property type="term" value="F:zinc ion binding"/>
    <property type="evidence" value="ECO:0007669"/>
    <property type="project" value="UniProtKB-UniRule"/>
</dbReference>
<dbReference type="GO" id="GO:0045892">
    <property type="term" value="P:negative regulation of DNA-templated transcription"/>
    <property type="evidence" value="ECO:0007669"/>
    <property type="project" value="UniProtKB-UniRule"/>
</dbReference>
<dbReference type="HAMAP" id="MF_00440">
    <property type="entry name" value="NrdR"/>
    <property type="match status" value="1"/>
</dbReference>
<dbReference type="InterPro" id="IPR005144">
    <property type="entry name" value="ATP-cone_dom"/>
</dbReference>
<dbReference type="InterPro" id="IPR055173">
    <property type="entry name" value="NrdR-like_N"/>
</dbReference>
<dbReference type="InterPro" id="IPR003796">
    <property type="entry name" value="RNR_NrdR-like"/>
</dbReference>
<dbReference type="NCBIfam" id="TIGR00244">
    <property type="entry name" value="transcriptional regulator NrdR"/>
    <property type="match status" value="1"/>
</dbReference>
<dbReference type="PANTHER" id="PTHR30455">
    <property type="entry name" value="TRANSCRIPTIONAL REPRESSOR NRDR"/>
    <property type="match status" value="1"/>
</dbReference>
<dbReference type="PANTHER" id="PTHR30455:SF2">
    <property type="entry name" value="TRANSCRIPTIONAL REPRESSOR NRDR"/>
    <property type="match status" value="1"/>
</dbReference>
<dbReference type="Pfam" id="PF03477">
    <property type="entry name" value="ATP-cone"/>
    <property type="match status" value="1"/>
</dbReference>
<dbReference type="Pfam" id="PF22811">
    <property type="entry name" value="Zn_ribbon_NrdR"/>
    <property type="match status" value="1"/>
</dbReference>
<dbReference type="PROSITE" id="PS51161">
    <property type="entry name" value="ATP_CONE"/>
    <property type="match status" value="1"/>
</dbReference>
<evidence type="ECO:0000255" key="1">
    <source>
        <dbReference type="HAMAP-Rule" id="MF_00440"/>
    </source>
</evidence>
<gene>
    <name evidence="1" type="primary">nrdR</name>
    <name type="ordered locus">ABAYE3547</name>
</gene>